<comment type="function">
    <text evidence="1">Negative regulator of class I heat shock genes (grpE-dnaK-dnaJ and groELS operons). Prevents heat-shock induction of these operons.</text>
</comment>
<comment type="similarity">
    <text evidence="1">Belongs to the HrcA family.</text>
</comment>
<feature type="chain" id="PRO_1000010431" description="Heat-inducible transcription repressor HrcA">
    <location>
        <begin position="1"/>
        <end position="343"/>
    </location>
</feature>
<sequence length="343" mass="36475">MGSADERRFEVLRAIVADFVATQEPIGSKSLVERHNLGVSSATVRNDMAVLEAEGYITQPHTSSGRVPTEKGYREFVDRLEDVKPLSSAERRAIQSFLESGVDLDDVLRRAVRLLAQLTRQVAVVQYPTLSTSTVRHLEVIALTPARLLMVVITDSGRVDQRIVELGDVIDDHQLAQLREILGQALEGKKLSAASVAVADLASQLGGAGGLGDAVGRAATVLLESLVEHTEERLLLGGTANLTRNAADFGGSLRSILEALEEQVVVLRLLAAQQEAGKVTVRIGHETASEQMVGTSMVSTAYGTAHTVYGGMGVVGPTRMDYPGTIASVAAVALYIGDVLGAR</sequence>
<evidence type="ECO:0000255" key="1">
    <source>
        <dbReference type="HAMAP-Rule" id="MF_00081"/>
    </source>
</evidence>
<organism>
    <name type="scientific">Mycobacterium tuberculosis (strain ATCC 25177 / H37Ra)</name>
    <dbReference type="NCBI Taxonomy" id="419947"/>
    <lineage>
        <taxon>Bacteria</taxon>
        <taxon>Bacillati</taxon>
        <taxon>Actinomycetota</taxon>
        <taxon>Actinomycetes</taxon>
        <taxon>Mycobacteriales</taxon>
        <taxon>Mycobacteriaceae</taxon>
        <taxon>Mycobacterium</taxon>
        <taxon>Mycobacterium tuberculosis complex</taxon>
    </lineage>
</organism>
<reference key="1">
    <citation type="journal article" date="2008" name="PLoS ONE">
        <title>Genetic basis of virulence attenuation revealed by comparative genomic analysis of Mycobacterium tuberculosis strain H37Ra versus H37Rv.</title>
        <authorList>
            <person name="Zheng H."/>
            <person name="Lu L."/>
            <person name="Wang B."/>
            <person name="Pu S."/>
            <person name="Zhang X."/>
            <person name="Zhu G."/>
            <person name="Shi W."/>
            <person name="Zhang L."/>
            <person name="Wang H."/>
            <person name="Wang S."/>
            <person name="Zhao G."/>
            <person name="Zhang Y."/>
        </authorList>
    </citation>
    <scope>NUCLEOTIDE SEQUENCE [LARGE SCALE GENOMIC DNA]</scope>
    <source>
        <strain>ATCC 25177 / H37Ra</strain>
    </source>
</reference>
<name>HRCA_MYCTA</name>
<protein>
    <recommendedName>
        <fullName evidence="1">Heat-inducible transcription repressor HrcA</fullName>
    </recommendedName>
</protein>
<gene>
    <name evidence="1" type="primary">hrcA</name>
    <name type="ordered locus">MRA_2397</name>
</gene>
<keyword id="KW-1185">Reference proteome</keyword>
<keyword id="KW-0678">Repressor</keyword>
<keyword id="KW-0346">Stress response</keyword>
<keyword id="KW-0804">Transcription</keyword>
<keyword id="KW-0805">Transcription regulation</keyword>
<accession>A5U567</accession>
<dbReference type="EMBL" id="CP000611">
    <property type="protein sequence ID" value="ABQ74167.1"/>
    <property type="molecule type" value="Genomic_DNA"/>
</dbReference>
<dbReference type="RefSeq" id="WP_003412252.1">
    <property type="nucleotide sequence ID" value="NZ_CP016972.1"/>
</dbReference>
<dbReference type="SMR" id="A5U567"/>
<dbReference type="GeneID" id="45426359"/>
<dbReference type="KEGG" id="mra:MRA_2397"/>
<dbReference type="eggNOG" id="COG1420">
    <property type="taxonomic scope" value="Bacteria"/>
</dbReference>
<dbReference type="HOGENOM" id="CLU_050019_2_0_11"/>
<dbReference type="Proteomes" id="UP000001988">
    <property type="component" value="Chromosome"/>
</dbReference>
<dbReference type="GO" id="GO:0003677">
    <property type="term" value="F:DNA binding"/>
    <property type="evidence" value="ECO:0007669"/>
    <property type="project" value="InterPro"/>
</dbReference>
<dbReference type="GO" id="GO:0045892">
    <property type="term" value="P:negative regulation of DNA-templated transcription"/>
    <property type="evidence" value="ECO:0007669"/>
    <property type="project" value="UniProtKB-UniRule"/>
</dbReference>
<dbReference type="FunFam" id="1.10.10.10:FF:000049">
    <property type="entry name" value="Heat-inducible transcription repressor HrcA"/>
    <property type="match status" value="1"/>
</dbReference>
<dbReference type="FunFam" id="3.30.390.60:FF:000003">
    <property type="entry name" value="Heat-inducible transcription repressor HrcA"/>
    <property type="match status" value="1"/>
</dbReference>
<dbReference type="Gene3D" id="3.30.450.40">
    <property type="match status" value="1"/>
</dbReference>
<dbReference type="Gene3D" id="3.30.390.60">
    <property type="entry name" value="Heat-inducible transcription repressor hrca homolog, domain 3"/>
    <property type="match status" value="1"/>
</dbReference>
<dbReference type="Gene3D" id="1.10.10.10">
    <property type="entry name" value="Winged helix-like DNA-binding domain superfamily/Winged helix DNA-binding domain"/>
    <property type="match status" value="1"/>
</dbReference>
<dbReference type="HAMAP" id="MF_00081">
    <property type="entry name" value="HrcA"/>
    <property type="match status" value="1"/>
</dbReference>
<dbReference type="InterPro" id="IPR029016">
    <property type="entry name" value="GAF-like_dom_sf"/>
</dbReference>
<dbReference type="InterPro" id="IPR002571">
    <property type="entry name" value="HrcA"/>
</dbReference>
<dbReference type="InterPro" id="IPR021153">
    <property type="entry name" value="HrcA_C"/>
</dbReference>
<dbReference type="InterPro" id="IPR036388">
    <property type="entry name" value="WH-like_DNA-bd_sf"/>
</dbReference>
<dbReference type="InterPro" id="IPR036390">
    <property type="entry name" value="WH_DNA-bd_sf"/>
</dbReference>
<dbReference type="InterPro" id="IPR023120">
    <property type="entry name" value="WHTH_transcript_rep_HrcA_IDD"/>
</dbReference>
<dbReference type="NCBIfam" id="TIGR00331">
    <property type="entry name" value="hrcA"/>
    <property type="match status" value="1"/>
</dbReference>
<dbReference type="PANTHER" id="PTHR34824">
    <property type="entry name" value="HEAT-INDUCIBLE TRANSCRIPTION REPRESSOR HRCA"/>
    <property type="match status" value="1"/>
</dbReference>
<dbReference type="PANTHER" id="PTHR34824:SF1">
    <property type="entry name" value="HEAT-INDUCIBLE TRANSCRIPTION REPRESSOR HRCA"/>
    <property type="match status" value="1"/>
</dbReference>
<dbReference type="Pfam" id="PF01628">
    <property type="entry name" value="HrcA"/>
    <property type="match status" value="1"/>
</dbReference>
<dbReference type="PIRSF" id="PIRSF005485">
    <property type="entry name" value="HrcA"/>
    <property type="match status" value="1"/>
</dbReference>
<dbReference type="SUPFAM" id="SSF55781">
    <property type="entry name" value="GAF domain-like"/>
    <property type="match status" value="1"/>
</dbReference>
<dbReference type="SUPFAM" id="SSF46785">
    <property type="entry name" value="Winged helix' DNA-binding domain"/>
    <property type="match status" value="1"/>
</dbReference>
<proteinExistence type="inferred from homology"/>